<name>FSA_ENT38</name>
<keyword id="KW-0119">Carbohydrate metabolism</keyword>
<keyword id="KW-0963">Cytoplasm</keyword>
<keyword id="KW-0456">Lyase</keyword>
<keyword id="KW-0704">Schiff base</keyword>
<organism>
    <name type="scientific">Enterobacter sp. (strain 638)</name>
    <dbReference type="NCBI Taxonomy" id="399742"/>
    <lineage>
        <taxon>Bacteria</taxon>
        <taxon>Pseudomonadati</taxon>
        <taxon>Pseudomonadota</taxon>
        <taxon>Gammaproteobacteria</taxon>
        <taxon>Enterobacterales</taxon>
        <taxon>Enterobacteriaceae</taxon>
        <taxon>Enterobacter</taxon>
    </lineage>
</organism>
<gene>
    <name evidence="1" type="primary">fsa</name>
    <name type="ordered locus">Ent638_1319</name>
</gene>
<evidence type="ECO:0000255" key="1">
    <source>
        <dbReference type="HAMAP-Rule" id="MF_00496"/>
    </source>
</evidence>
<comment type="function">
    <text evidence="1">Catalyzes the reversible formation of fructose 6-phosphate from dihydroxyacetone and D-glyceraldehyde 3-phosphate via an aldolization reaction.</text>
</comment>
<comment type="catalytic activity">
    <reaction evidence="1">
        <text>beta-D-fructose 6-phosphate = dihydroxyacetone + D-glyceraldehyde 3-phosphate</text>
        <dbReference type="Rhea" id="RHEA:28002"/>
        <dbReference type="ChEBI" id="CHEBI:16016"/>
        <dbReference type="ChEBI" id="CHEBI:57634"/>
        <dbReference type="ChEBI" id="CHEBI:59776"/>
    </reaction>
</comment>
<comment type="subunit">
    <text evidence="1">Homodecamer.</text>
</comment>
<comment type="subcellular location">
    <subcellularLocation>
        <location evidence="1">Cytoplasm</location>
    </subcellularLocation>
</comment>
<comment type="similarity">
    <text evidence="1">Belongs to the transaldolase family. Type 3A subfamily.</text>
</comment>
<feature type="chain" id="PRO_1000060485" description="Fructose-6-phosphate aldolase">
    <location>
        <begin position="1"/>
        <end position="220"/>
    </location>
</feature>
<feature type="active site" description="Schiff-base intermediate with substrate" evidence="1">
    <location>
        <position position="85"/>
    </location>
</feature>
<dbReference type="EC" id="4.1.2.-" evidence="1"/>
<dbReference type="EMBL" id="CP000653">
    <property type="protein sequence ID" value="ABP60000.1"/>
    <property type="molecule type" value="Genomic_DNA"/>
</dbReference>
<dbReference type="RefSeq" id="WP_012016719.1">
    <property type="nucleotide sequence ID" value="NC_009436.1"/>
</dbReference>
<dbReference type="SMR" id="A4W8H0"/>
<dbReference type="STRING" id="399742.Ent638_1319"/>
<dbReference type="KEGG" id="ent:Ent638_1319"/>
<dbReference type="eggNOG" id="COG0176">
    <property type="taxonomic scope" value="Bacteria"/>
</dbReference>
<dbReference type="HOGENOM" id="CLU_079764_2_0_6"/>
<dbReference type="OrthoDB" id="9807051at2"/>
<dbReference type="Proteomes" id="UP000000230">
    <property type="component" value="Chromosome"/>
</dbReference>
<dbReference type="GO" id="GO:0005737">
    <property type="term" value="C:cytoplasm"/>
    <property type="evidence" value="ECO:0007669"/>
    <property type="project" value="UniProtKB-SubCell"/>
</dbReference>
<dbReference type="GO" id="GO:0097023">
    <property type="term" value="F:fructose 6-phosphate aldolase activity"/>
    <property type="evidence" value="ECO:0007669"/>
    <property type="project" value="RHEA"/>
</dbReference>
<dbReference type="GO" id="GO:0006000">
    <property type="term" value="P:fructose metabolic process"/>
    <property type="evidence" value="ECO:0007669"/>
    <property type="project" value="UniProtKB-UniRule"/>
</dbReference>
<dbReference type="CDD" id="cd00956">
    <property type="entry name" value="Transaldolase_FSA"/>
    <property type="match status" value="1"/>
</dbReference>
<dbReference type="FunFam" id="3.20.20.70:FF:000018">
    <property type="entry name" value="Probable transaldolase"/>
    <property type="match status" value="1"/>
</dbReference>
<dbReference type="Gene3D" id="3.20.20.70">
    <property type="entry name" value="Aldolase class I"/>
    <property type="match status" value="1"/>
</dbReference>
<dbReference type="HAMAP" id="MF_00496">
    <property type="entry name" value="F6P_aldolase"/>
    <property type="match status" value="1"/>
</dbReference>
<dbReference type="InterPro" id="IPR013785">
    <property type="entry name" value="Aldolase_TIM"/>
</dbReference>
<dbReference type="InterPro" id="IPR023001">
    <property type="entry name" value="F6P_aldolase"/>
</dbReference>
<dbReference type="InterPro" id="IPR001585">
    <property type="entry name" value="TAL/FSA"/>
</dbReference>
<dbReference type="InterPro" id="IPR004731">
    <property type="entry name" value="Transaldolase_3B/F6P_aldolase"/>
</dbReference>
<dbReference type="InterPro" id="IPR018225">
    <property type="entry name" value="Transaldolase_AS"/>
</dbReference>
<dbReference type="InterPro" id="IPR033919">
    <property type="entry name" value="TSA/FSA_arc/bac"/>
</dbReference>
<dbReference type="NCBIfam" id="TIGR00875">
    <property type="entry name" value="fsa_talC_mipB"/>
    <property type="match status" value="1"/>
</dbReference>
<dbReference type="NCBIfam" id="NF009296">
    <property type="entry name" value="PRK12653.1"/>
    <property type="match status" value="1"/>
</dbReference>
<dbReference type="PANTHER" id="PTHR10683:SF40">
    <property type="entry name" value="FRUCTOSE-6-PHOSPHATE ALDOLASE 1-RELATED"/>
    <property type="match status" value="1"/>
</dbReference>
<dbReference type="PANTHER" id="PTHR10683">
    <property type="entry name" value="TRANSALDOLASE"/>
    <property type="match status" value="1"/>
</dbReference>
<dbReference type="Pfam" id="PF00923">
    <property type="entry name" value="TAL_FSA"/>
    <property type="match status" value="1"/>
</dbReference>
<dbReference type="SUPFAM" id="SSF51569">
    <property type="entry name" value="Aldolase"/>
    <property type="match status" value="1"/>
</dbReference>
<dbReference type="PROSITE" id="PS01054">
    <property type="entry name" value="TRANSALDOLASE_1"/>
    <property type="match status" value="1"/>
</dbReference>
<dbReference type="PROSITE" id="PS00958">
    <property type="entry name" value="TRANSALDOLASE_2"/>
    <property type="match status" value="1"/>
</dbReference>
<sequence length="220" mass="22959">MELYLDTSDVAAVKKLARIFPLAGVTTNPSIVAAGKKPLDVLLPELHDALGGKGQLFAQVMATSAEAMVEDARKLRAIINDLVVKVPVTAEGLAAIKILKAEGIPTLGTAVYGAAQGMLSALAGAEYVAPYVNRLDAQGGDGIQTVVELQQLLTLHAPQAKVLAASFKTPRQALNCLLAGCEAITLPLDVAQQFISAPAVDAAVAKFEQDWQSAFGRTSI</sequence>
<accession>A4W8H0</accession>
<reference key="1">
    <citation type="journal article" date="2010" name="PLoS Genet.">
        <title>Genome sequence of the plant growth promoting endophytic bacterium Enterobacter sp. 638.</title>
        <authorList>
            <person name="Taghavi S."/>
            <person name="van der Lelie D."/>
            <person name="Hoffman A."/>
            <person name="Zhang Y.B."/>
            <person name="Walla M.D."/>
            <person name="Vangronsveld J."/>
            <person name="Newman L."/>
            <person name="Monchy S."/>
        </authorList>
    </citation>
    <scope>NUCLEOTIDE SEQUENCE [LARGE SCALE GENOMIC DNA]</scope>
    <source>
        <strain>638</strain>
    </source>
</reference>
<protein>
    <recommendedName>
        <fullName evidence="1">Fructose-6-phosphate aldolase</fullName>
        <ecNumber evidence="1">4.1.2.-</ecNumber>
    </recommendedName>
</protein>
<proteinExistence type="inferred from homology"/>